<dbReference type="EC" id="3.1.3.11"/>
<dbReference type="EMBL" id="CP001658">
    <property type="protein sequence ID" value="ACT25968.1"/>
    <property type="status" value="ALT_INIT"/>
    <property type="molecule type" value="Genomic_DNA"/>
</dbReference>
<dbReference type="RefSeq" id="WP_003898726.1">
    <property type="nucleotide sequence ID" value="NZ_KK341220.1"/>
</dbReference>
<dbReference type="SMR" id="C6DV63"/>
<dbReference type="GeneID" id="45425073"/>
<dbReference type="KEGG" id="mtb:TBMG_02885"/>
<dbReference type="PATRIC" id="fig|478434.13.peg.1136"/>
<dbReference type="HOGENOM" id="CLU_054938_0_0_11"/>
<dbReference type="UniPathway" id="UPA00138"/>
<dbReference type="GO" id="GO:0005829">
    <property type="term" value="C:cytosol"/>
    <property type="evidence" value="ECO:0007669"/>
    <property type="project" value="TreeGrafter"/>
</dbReference>
<dbReference type="GO" id="GO:0042132">
    <property type="term" value="F:fructose 1,6-bisphosphate 1-phosphatase activity"/>
    <property type="evidence" value="ECO:0007669"/>
    <property type="project" value="UniProtKB-EC"/>
</dbReference>
<dbReference type="GO" id="GO:0046872">
    <property type="term" value="F:metal ion binding"/>
    <property type="evidence" value="ECO:0007669"/>
    <property type="project" value="UniProtKB-KW"/>
</dbReference>
<dbReference type="GO" id="GO:0030388">
    <property type="term" value="P:fructose 1,6-bisphosphate metabolic process"/>
    <property type="evidence" value="ECO:0007669"/>
    <property type="project" value="TreeGrafter"/>
</dbReference>
<dbReference type="GO" id="GO:0006094">
    <property type="term" value="P:gluconeogenesis"/>
    <property type="evidence" value="ECO:0007669"/>
    <property type="project" value="UniProtKB-UniPathway"/>
</dbReference>
<dbReference type="GO" id="GO:0006071">
    <property type="term" value="P:glycerol metabolic process"/>
    <property type="evidence" value="ECO:0007669"/>
    <property type="project" value="InterPro"/>
</dbReference>
<dbReference type="CDD" id="cd01516">
    <property type="entry name" value="FBPase_glpX"/>
    <property type="match status" value="1"/>
</dbReference>
<dbReference type="FunFam" id="3.40.190.90:FF:000001">
    <property type="entry name" value="Fructose-1,6-bisphosphatase"/>
    <property type="match status" value="1"/>
</dbReference>
<dbReference type="Gene3D" id="3.40.190.90">
    <property type="match status" value="1"/>
</dbReference>
<dbReference type="Gene3D" id="3.30.540.10">
    <property type="entry name" value="Fructose-1,6-Bisphosphatase, subunit A, domain 1"/>
    <property type="match status" value="1"/>
</dbReference>
<dbReference type="InterPro" id="IPR004464">
    <property type="entry name" value="FBPase_class-2/SBPase"/>
</dbReference>
<dbReference type="NCBIfam" id="TIGR00330">
    <property type="entry name" value="glpX"/>
    <property type="match status" value="1"/>
</dbReference>
<dbReference type="PANTHER" id="PTHR30447:SF0">
    <property type="entry name" value="FRUCTOSE-1,6-BISPHOSPHATASE 1 CLASS 2-RELATED"/>
    <property type="match status" value="1"/>
</dbReference>
<dbReference type="PANTHER" id="PTHR30447">
    <property type="entry name" value="FRUCTOSE-1,6-BISPHOSPHATASE CLASS 2"/>
    <property type="match status" value="1"/>
</dbReference>
<dbReference type="Pfam" id="PF03320">
    <property type="entry name" value="FBPase_glpX"/>
    <property type="match status" value="1"/>
</dbReference>
<dbReference type="PIRSF" id="PIRSF004532">
    <property type="entry name" value="GlpX"/>
    <property type="match status" value="1"/>
</dbReference>
<dbReference type="SUPFAM" id="SSF56655">
    <property type="entry name" value="Carbohydrate phosphatase"/>
    <property type="match status" value="1"/>
</dbReference>
<accession>C6DV63</accession>
<keyword id="KW-0119">Carbohydrate metabolism</keyword>
<keyword id="KW-0963">Cytoplasm</keyword>
<keyword id="KW-0378">Hydrolase</keyword>
<keyword id="KW-0464">Manganese</keyword>
<keyword id="KW-0479">Metal-binding</keyword>
<name>GLPX_MYCTK</name>
<feature type="chain" id="PRO_0000403681" description="Fructose-1,6-bisphosphatase class 2">
    <location>
        <begin position="1"/>
        <end position="362"/>
    </location>
</feature>
<feature type="region of interest" description="Disordered" evidence="2">
    <location>
        <begin position="1"/>
        <end position="32"/>
    </location>
</feature>
<feature type="compositionally biased region" description="Polar residues" evidence="2">
    <location>
        <begin position="1"/>
        <end position="12"/>
    </location>
</feature>
<feature type="compositionally biased region" description="Basic and acidic residues" evidence="2">
    <location>
        <begin position="17"/>
        <end position="30"/>
    </location>
</feature>
<feature type="binding site" evidence="1">
    <location>
        <position position="61"/>
    </location>
    <ligand>
        <name>Mn(2+)</name>
        <dbReference type="ChEBI" id="CHEBI:29035"/>
        <label>1</label>
    </ligand>
</feature>
<feature type="binding site" evidence="1">
    <location>
        <position position="85"/>
    </location>
    <ligand>
        <name>Mn(2+)</name>
        <dbReference type="ChEBI" id="CHEBI:29035"/>
        <label>1</label>
    </ligand>
</feature>
<feature type="binding site" evidence="1">
    <location>
        <position position="113"/>
    </location>
    <ligand>
        <name>Mn(2+)</name>
        <dbReference type="ChEBI" id="CHEBI:29035"/>
        <label>2</label>
    </ligand>
</feature>
<feature type="binding site" evidence="1">
    <location>
        <begin position="116"/>
        <end position="118"/>
    </location>
    <ligand>
        <name>substrate</name>
    </ligand>
</feature>
<feature type="binding site" evidence="1">
    <location>
        <position position="116"/>
    </location>
    <ligand>
        <name>Mn(2+)</name>
        <dbReference type="ChEBI" id="CHEBI:29035"/>
        <label>2</label>
    </ligand>
</feature>
<feature type="binding site" evidence="1">
    <location>
        <position position="148"/>
    </location>
    <ligand>
        <name>substrate</name>
    </ligand>
</feature>
<feature type="binding site" evidence="1">
    <location>
        <begin position="193"/>
        <end position="195"/>
    </location>
    <ligand>
        <name>substrate</name>
    </ligand>
</feature>
<feature type="binding site" evidence="1">
    <location>
        <begin position="215"/>
        <end position="217"/>
    </location>
    <ligand>
        <name>substrate</name>
    </ligand>
</feature>
<feature type="binding site" evidence="1">
    <location>
        <position position="239"/>
    </location>
    <ligand>
        <name>substrate</name>
    </ligand>
</feature>
<feature type="binding site" evidence="1">
    <location>
        <position position="242"/>
    </location>
    <ligand>
        <name>Mn(2+)</name>
        <dbReference type="ChEBI" id="CHEBI:29035"/>
        <label>2</label>
    </ligand>
</feature>
<comment type="function">
    <text evidence="1">Catalyzes the hydrolysis of fructose 1,6-bisphosphate to fructose 6-phosphate.</text>
</comment>
<comment type="catalytic activity">
    <reaction>
        <text>beta-D-fructose 1,6-bisphosphate + H2O = beta-D-fructose 6-phosphate + phosphate</text>
        <dbReference type="Rhea" id="RHEA:11064"/>
        <dbReference type="ChEBI" id="CHEBI:15377"/>
        <dbReference type="ChEBI" id="CHEBI:32966"/>
        <dbReference type="ChEBI" id="CHEBI:43474"/>
        <dbReference type="ChEBI" id="CHEBI:57634"/>
        <dbReference type="EC" id="3.1.3.11"/>
    </reaction>
</comment>
<comment type="cofactor">
    <cofactor evidence="1">
        <name>Mn(2+)</name>
        <dbReference type="ChEBI" id="CHEBI:29035"/>
    </cofactor>
</comment>
<comment type="pathway">
    <text>Carbohydrate biosynthesis; gluconeogenesis.</text>
</comment>
<comment type="subcellular location">
    <subcellularLocation>
        <location evidence="1">Cytoplasm</location>
    </subcellularLocation>
</comment>
<comment type="similarity">
    <text evidence="3">Belongs to the FBPase class 2 family.</text>
</comment>
<comment type="sequence caution" evidence="3">
    <conflict type="erroneous initiation">
        <sequence resource="EMBL-CDS" id="ACT25968"/>
    </conflict>
    <text>Truncated N-terminus.</text>
</comment>
<sequence length="362" mass="38084">MTAEGSGSSTAAVASHDPSHTRPSRREAPDRNLAMELVRVTEAGAMAAGRWVGRGDKEGGDGAAVDAMRELVNSVSMRGVVVIGEGEKDHAPMLYNGEEVGNGDGPECDFAVDPIDGTTLMSKGMTNAISVLAVADRGTMFDPSAVFYMNKIAVGPDAAHVLDITAPISENIRAVAKVKDLSVRDMTVCILDRPRHAQLIHDVRATGARIRLITDGDVAGAISACRPHSGTDLLAGIGGTPEGIIAAAAIRCMGGAIQAQLAPRDDAERRKALEAGYDLNQVLTTEDLVSGENVFFCATGVTDGDLLKGVRYYPGGCTTHSIVMRSKSGTVRMIEAYHRLSKLNEYSAIDFTGDSSAVYPLP</sequence>
<organism>
    <name type="scientific">Mycobacterium tuberculosis (strain KZN 1435 / MDR)</name>
    <dbReference type="NCBI Taxonomy" id="478434"/>
    <lineage>
        <taxon>Bacteria</taxon>
        <taxon>Bacillati</taxon>
        <taxon>Actinomycetota</taxon>
        <taxon>Actinomycetes</taxon>
        <taxon>Mycobacteriales</taxon>
        <taxon>Mycobacteriaceae</taxon>
        <taxon>Mycobacterium</taxon>
        <taxon>Mycobacterium tuberculosis complex</taxon>
    </lineage>
</organism>
<reference key="1">
    <citation type="submission" date="2009-07" db="EMBL/GenBank/DDBJ databases">
        <title>The genome sequence of Mycobacterium tuberculosis strain KZN 1435.</title>
        <authorList>
            <person name="Murray M."/>
            <person name="Pillay M."/>
            <person name="Borowsky M.L."/>
            <person name="Young S.K."/>
            <person name="Zeng Q."/>
            <person name="Koehrsen M."/>
            <person name="Alvarado L."/>
            <person name="Berlin A.M."/>
            <person name="Borenstein D."/>
            <person name="Chen Z."/>
            <person name="Engels R."/>
            <person name="Freedman E."/>
            <person name="Gellesch M."/>
            <person name="Goldberg J."/>
            <person name="Griggs A."/>
            <person name="Gujja S."/>
            <person name="Heiman D.I."/>
            <person name="Hepburn T.A."/>
            <person name="Howarth C."/>
            <person name="Jen D."/>
            <person name="Larson L."/>
            <person name="Lewis B."/>
            <person name="Mehta T."/>
            <person name="Park D."/>
            <person name="Pearson M."/>
            <person name="Roberts A."/>
            <person name="Saif S."/>
            <person name="Shea T.D."/>
            <person name="Shenoy N."/>
            <person name="Sisk P."/>
            <person name="Stolte C."/>
            <person name="Sykes S.N."/>
            <person name="Walk T."/>
            <person name="White J."/>
            <person name="Yandava C."/>
            <person name="Haas B."/>
            <person name="Nusbaum C."/>
            <person name="Galagan J."/>
            <person name="Birren B."/>
        </authorList>
    </citation>
    <scope>NUCLEOTIDE SEQUENCE [LARGE SCALE GENOMIC DNA]</scope>
    <source>
        <strain>KZN 1435 / MDR</strain>
    </source>
</reference>
<protein>
    <recommendedName>
        <fullName>Fructose-1,6-bisphosphatase class 2</fullName>
        <shortName>FBPase class 2</shortName>
        <ecNumber>3.1.3.11</ecNumber>
    </recommendedName>
    <alternativeName>
        <fullName>D-fructose-1,6-bisphosphate 1-phosphohydrolase class 2</fullName>
    </alternativeName>
</protein>
<gene>
    <name type="primary">glpX</name>
    <name type="ordered locus">TBMG_02885</name>
</gene>
<proteinExistence type="inferred from homology"/>
<evidence type="ECO:0000250" key="1"/>
<evidence type="ECO:0000256" key="2">
    <source>
        <dbReference type="SAM" id="MobiDB-lite"/>
    </source>
</evidence>
<evidence type="ECO:0000305" key="3"/>